<gene>
    <name type="primary">mt-co3</name>
    <name type="synonym">coiii</name>
    <name type="synonym">coxiii</name>
    <name type="synonym">mtco3</name>
</gene>
<protein>
    <recommendedName>
        <fullName>Cytochrome c oxidase subunit 3</fullName>
        <ecNumber>7.1.1.9</ecNumber>
    </recommendedName>
    <alternativeName>
        <fullName>Cytochrome c oxidase polypeptide III</fullName>
    </alternativeName>
</protein>
<accession>P34198</accession>
<sequence length="261" mass="29511">MAHQAHAYHMVDPSPWPLTGAIGALFLTSGLAIWFHFQSVTLLTLGLILLLLTMYQWWRDIIREGTFQGHHTPPVQKGLRYGMILFITSEVFFFLGFFWAFYHSSLAPTPELGGCWPPTGITPLDPFEVPLLNTAVLLASGVTVTWAHHSLMEGARKQAIQALALTIILGVYFTALQAMEYYEAPFTIADGVYGSTFFVATGFHGLHVIIGSSFLAVCLLRQIQYHFTSEHHFGFEAAAWYWHFVDVVWLFLYVSIYWWGS</sequence>
<keyword id="KW-0472">Membrane</keyword>
<keyword id="KW-0496">Mitochondrion</keyword>
<keyword id="KW-0999">Mitochondrion inner membrane</keyword>
<keyword id="KW-1278">Translocase</keyword>
<keyword id="KW-0812">Transmembrane</keyword>
<keyword id="KW-1133">Transmembrane helix</keyword>
<comment type="function">
    <text evidence="2">Component of the cytochrome c oxidase, the last enzyme in the mitochondrial electron transport chain which drives oxidative phosphorylation. The respiratory chain contains 3 multisubunit complexes succinate dehydrogenase (complex II, CII), ubiquinol-cytochrome c oxidoreductase (cytochrome b-c1 complex, complex III, CIII) and cytochrome c oxidase (complex IV, CIV), that cooperate to transfer electrons derived from NADH and succinate to molecular oxygen, creating an electrochemical gradient over the inner membrane that drives transmembrane transport and the ATP synthase. Cytochrome c oxidase is the component of the respiratory chain that catalyzes the reduction of oxygen to water. Electrons originating from reduced cytochrome c in the intermembrane space (IMS) are transferred via the dinuclear copper A center (CU(A)) of subunit 2 and heme A of subunit 1 to the active site in subunit 1, a binuclear center (BNC) formed by heme A3 and copper B (CU(B)). The BNC reduces molecular oxygen to 2 water molecules using 4 electrons from cytochrome c in the IMS and 4 protons from the mitochondrial matrix.</text>
</comment>
<comment type="catalytic activity">
    <reaction evidence="2">
        <text>4 Fe(II)-[cytochrome c] + O2 + 8 H(+)(in) = 4 Fe(III)-[cytochrome c] + 2 H2O + 4 H(+)(out)</text>
        <dbReference type="Rhea" id="RHEA:11436"/>
        <dbReference type="Rhea" id="RHEA-COMP:10350"/>
        <dbReference type="Rhea" id="RHEA-COMP:14399"/>
        <dbReference type="ChEBI" id="CHEBI:15377"/>
        <dbReference type="ChEBI" id="CHEBI:15378"/>
        <dbReference type="ChEBI" id="CHEBI:15379"/>
        <dbReference type="ChEBI" id="CHEBI:29033"/>
        <dbReference type="ChEBI" id="CHEBI:29034"/>
        <dbReference type="EC" id="7.1.1.9"/>
    </reaction>
    <physiologicalReaction direction="left-to-right" evidence="2">
        <dbReference type="Rhea" id="RHEA:11437"/>
    </physiologicalReaction>
</comment>
<comment type="subunit">
    <text evidence="1">Component of the cytochrome c oxidase (complex IV, CIV), a multisubunit enzyme composed of 14 subunits. The complex is composed of a catalytic core of 3 subunits MT-CO1, MT-CO2 and MT-CO3, encoded in the mitochondrial DNA, and 11 supernumerary subunits COX4I, COX5A, COX5B, COX6A, COX6B, COX6C, COX7A, COX7B, COX7C, COX8 and NDUFA4, which are encoded in the nuclear genome. The complex exists as a monomer or a dimer and forms supercomplexes (SCs) in the inner mitochondrial membrane with NADH-ubiquinone oxidoreductase (complex I, CI) and ubiquinol-cytochrome c oxidoreductase (cytochrome b-c1 complex, complex III, CIII), resulting in different assemblies (supercomplex SCI(1)III(2)IV(1) and megacomplex MCI(2)III(2)IV(2)).</text>
</comment>
<comment type="subcellular location">
    <subcellularLocation>
        <location evidence="1">Mitochondrion inner membrane</location>
        <topology evidence="1">Multi-pass membrane protein</topology>
    </subcellularLocation>
</comment>
<comment type="similarity">
    <text evidence="3">Belongs to the cytochrome c oxidase subunit 3 family.</text>
</comment>
<evidence type="ECO:0000250" key="1">
    <source>
        <dbReference type="UniProtKB" id="P00415"/>
    </source>
</evidence>
<evidence type="ECO:0000250" key="2">
    <source>
        <dbReference type="UniProtKB" id="P00420"/>
    </source>
</evidence>
<evidence type="ECO:0000305" key="3"/>
<feature type="chain" id="PRO_0000183760" description="Cytochrome c oxidase subunit 3">
    <location>
        <begin position="1"/>
        <end position="261"/>
    </location>
</feature>
<feature type="topological domain" description="Mitochondrial matrix" evidence="1">
    <location>
        <begin position="1"/>
        <end position="15"/>
    </location>
</feature>
<feature type="transmembrane region" description="Helical; Name=I" evidence="1">
    <location>
        <begin position="16"/>
        <end position="34"/>
    </location>
</feature>
<feature type="topological domain" description="Mitochondrial intermembrane" evidence="1">
    <location>
        <begin position="35"/>
        <end position="40"/>
    </location>
</feature>
<feature type="transmembrane region" description="Helical; Name=II" evidence="1">
    <location>
        <begin position="41"/>
        <end position="66"/>
    </location>
</feature>
<feature type="topological domain" description="Mitochondrial matrix" evidence="1">
    <location>
        <begin position="67"/>
        <end position="72"/>
    </location>
</feature>
<feature type="transmembrane region" description="Helical; Name=III" evidence="1">
    <location>
        <begin position="73"/>
        <end position="105"/>
    </location>
</feature>
<feature type="topological domain" description="Mitochondrial intermembrane" evidence="1">
    <location>
        <begin position="106"/>
        <end position="128"/>
    </location>
</feature>
<feature type="transmembrane region" description="Helical; Name=IV" evidence="1">
    <location>
        <begin position="129"/>
        <end position="152"/>
    </location>
</feature>
<feature type="topological domain" description="Mitochondrial matrix" evidence="1">
    <location>
        <begin position="153"/>
        <end position="155"/>
    </location>
</feature>
<feature type="transmembrane region" description="Helical; Name=V" evidence="1">
    <location>
        <begin position="156"/>
        <end position="183"/>
    </location>
</feature>
<feature type="topological domain" description="Mitochondrial intermembrane" evidence="1">
    <location>
        <begin position="184"/>
        <end position="190"/>
    </location>
</feature>
<feature type="transmembrane region" description="Helical; Name=VI" evidence="1">
    <location>
        <begin position="191"/>
        <end position="223"/>
    </location>
</feature>
<feature type="topological domain" description="Mitochondrial matrix" evidence="1">
    <location>
        <begin position="224"/>
        <end position="232"/>
    </location>
</feature>
<feature type="transmembrane region" description="Helical; Name=VII" evidence="1">
    <location>
        <begin position="233"/>
        <end position="256"/>
    </location>
</feature>
<feature type="topological domain" description="Mitochondrial intermembrane" evidence="1">
    <location>
        <begin position="257"/>
        <end position="261"/>
    </location>
</feature>
<geneLocation type="mitochondrion"/>
<proteinExistence type="inferred from homology"/>
<organism>
    <name type="scientific">Formosania lacustris</name>
    <name type="common">Oriental stream loach</name>
    <name type="synonym">Crossostoma lacustre</name>
    <dbReference type="NCBI Taxonomy" id="7980"/>
    <lineage>
        <taxon>Eukaryota</taxon>
        <taxon>Metazoa</taxon>
        <taxon>Chordata</taxon>
        <taxon>Craniata</taxon>
        <taxon>Vertebrata</taxon>
        <taxon>Euteleostomi</taxon>
        <taxon>Actinopterygii</taxon>
        <taxon>Neopterygii</taxon>
        <taxon>Teleostei</taxon>
        <taxon>Ostariophysi</taxon>
        <taxon>Cypriniformes</taxon>
        <taxon>Gastromyzontidae</taxon>
        <taxon>Formosania</taxon>
    </lineage>
</organism>
<dbReference type="EC" id="7.1.1.9"/>
<dbReference type="EMBL" id="M91245">
    <property type="protein sequence ID" value="AAB96817.1"/>
    <property type="molecule type" value="Genomic_DNA"/>
</dbReference>
<dbReference type="PIR" id="S60277">
    <property type="entry name" value="S60277"/>
</dbReference>
<dbReference type="SMR" id="P34198"/>
<dbReference type="CTD" id="4514"/>
<dbReference type="GO" id="GO:0005743">
    <property type="term" value="C:mitochondrial inner membrane"/>
    <property type="evidence" value="ECO:0007669"/>
    <property type="project" value="UniProtKB-SubCell"/>
</dbReference>
<dbReference type="GO" id="GO:0045277">
    <property type="term" value="C:respiratory chain complex IV"/>
    <property type="evidence" value="ECO:0000250"/>
    <property type="project" value="UniProtKB"/>
</dbReference>
<dbReference type="GO" id="GO:0004129">
    <property type="term" value="F:cytochrome-c oxidase activity"/>
    <property type="evidence" value="ECO:0007669"/>
    <property type="project" value="UniProtKB-EC"/>
</dbReference>
<dbReference type="GO" id="GO:0006123">
    <property type="term" value="P:mitochondrial electron transport, cytochrome c to oxygen"/>
    <property type="evidence" value="ECO:0007669"/>
    <property type="project" value="TreeGrafter"/>
</dbReference>
<dbReference type="CDD" id="cd01665">
    <property type="entry name" value="Cyt_c_Oxidase_III"/>
    <property type="match status" value="1"/>
</dbReference>
<dbReference type="FunFam" id="1.10.287.70:FF:000048">
    <property type="entry name" value="Cytochrome c oxidase subunit 3"/>
    <property type="match status" value="1"/>
</dbReference>
<dbReference type="FunFam" id="1.20.120.80:FF:000002">
    <property type="entry name" value="Cytochrome c oxidase subunit 3"/>
    <property type="match status" value="1"/>
</dbReference>
<dbReference type="Gene3D" id="1.10.287.70">
    <property type="match status" value="1"/>
</dbReference>
<dbReference type="Gene3D" id="1.20.120.80">
    <property type="entry name" value="Cytochrome c oxidase, subunit III, four-helix bundle"/>
    <property type="match status" value="1"/>
</dbReference>
<dbReference type="InterPro" id="IPR024791">
    <property type="entry name" value="Cyt_c/ubiquinol_Oxase_su3"/>
</dbReference>
<dbReference type="InterPro" id="IPR033945">
    <property type="entry name" value="Cyt_c_oxase_su3_dom"/>
</dbReference>
<dbReference type="InterPro" id="IPR000298">
    <property type="entry name" value="Cyt_c_oxidase-like_su3"/>
</dbReference>
<dbReference type="InterPro" id="IPR035973">
    <property type="entry name" value="Cyt_c_oxidase_su3-like_sf"/>
</dbReference>
<dbReference type="InterPro" id="IPR013833">
    <property type="entry name" value="Cyt_c_oxidase_su3_a-hlx"/>
</dbReference>
<dbReference type="PANTHER" id="PTHR11403:SF7">
    <property type="entry name" value="CYTOCHROME C OXIDASE SUBUNIT 3"/>
    <property type="match status" value="1"/>
</dbReference>
<dbReference type="PANTHER" id="PTHR11403">
    <property type="entry name" value="CYTOCHROME C OXIDASE SUBUNIT III"/>
    <property type="match status" value="1"/>
</dbReference>
<dbReference type="Pfam" id="PF00510">
    <property type="entry name" value="COX3"/>
    <property type="match status" value="1"/>
</dbReference>
<dbReference type="SUPFAM" id="SSF81452">
    <property type="entry name" value="Cytochrome c oxidase subunit III-like"/>
    <property type="match status" value="1"/>
</dbReference>
<dbReference type="PROSITE" id="PS50253">
    <property type="entry name" value="COX3"/>
    <property type="match status" value="1"/>
</dbReference>
<name>COX3_FORLA</name>
<reference key="1">
    <citation type="journal article" date="1992" name="Nucleic Acids Res.">
        <title>The complete nucleotide sequence of the Crossostoma lacustre mitochondrial genome: conservation and variations among vertebrates.</title>
        <authorList>
            <person name="Tzeng C.-S."/>
            <person name="Hui C.-F."/>
            <person name="Shen S.-C."/>
            <person name="Huang P.C."/>
        </authorList>
    </citation>
    <scope>NUCLEOTIDE SEQUENCE [GENOMIC DNA]</scope>
</reference>
<reference key="2">
    <citation type="submission" date="1996-05" db="EMBL/GenBank/DDBJ databases">
        <authorList>
            <person name="Tzeng C.-S."/>
        </authorList>
    </citation>
    <scope>SEQUENCE REVISION</scope>
</reference>